<gene>
    <name evidence="1" type="primary">recO</name>
    <name type="ordered locus">SSU05_0023</name>
</gene>
<proteinExistence type="inferred from homology"/>
<organism>
    <name type="scientific">Streptococcus suis (strain 05ZYH33)</name>
    <dbReference type="NCBI Taxonomy" id="391295"/>
    <lineage>
        <taxon>Bacteria</taxon>
        <taxon>Bacillati</taxon>
        <taxon>Bacillota</taxon>
        <taxon>Bacilli</taxon>
        <taxon>Lactobacillales</taxon>
        <taxon>Streptococcaceae</taxon>
        <taxon>Streptococcus</taxon>
    </lineage>
</organism>
<evidence type="ECO:0000255" key="1">
    <source>
        <dbReference type="HAMAP-Rule" id="MF_00201"/>
    </source>
</evidence>
<comment type="function">
    <text evidence="1">Involved in DNA repair and RecF pathway recombination.</text>
</comment>
<comment type="similarity">
    <text evidence="1">Belongs to the RecO family.</text>
</comment>
<keyword id="KW-0227">DNA damage</keyword>
<keyword id="KW-0233">DNA recombination</keyword>
<keyword id="KW-0234">DNA repair</keyword>
<feature type="chain" id="PRO_1000012163" description="DNA repair protein RecO">
    <location>
        <begin position="1"/>
        <end position="260"/>
    </location>
</feature>
<protein>
    <recommendedName>
        <fullName evidence="1">DNA repair protein RecO</fullName>
    </recommendedName>
    <alternativeName>
        <fullName evidence="1">Recombination protein O</fullName>
    </alternativeName>
</protein>
<accession>A4VSA6</accession>
<sequence>MERIETRGLVLYNRNFREDDKLVKIFTEKAGKRMFFVKHASKSKLVASIQPLTYADFIVKINDDGLSYIEDFHQVQPFKNINGDIFKLSYATYILALADAALQDKVYDPALFAFLVKTLDLMESGLDYEVLTNIFEIQLLGRFGISLNFHECAFCHRVGLPFDYSYKYSGVLCPQHYQQDERRAYLDPNVPYLLDQFQAISFDELETISIKPEMKRKLRFFIDQLYEEYVGIHLKSKKFIDDLSSWGQIMKPRTENEETE</sequence>
<reference key="1">
    <citation type="journal article" date="2007" name="PLoS ONE">
        <title>A glimpse of streptococcal toxic shock syndrome from comparative genomics of S. suis 2 Chinese isolates.</title>
        <authorList>
            <person name="Chen C."/>
            <person name="Tang J."/>
            <person name="Dong W."/>
            <person name="Wang C."/>
            <person name="Feng Y."/>
            <person name="Wang J."/>
            <person name="Zheng F."/>
            <person name="Pan X."/>
            <person name="Liu D."/>
            <person name="Li M."/>
            <person name="Song Y."/>
            <person name="Zhu X."/>
            <person name="Sun H."/>
            <person name="Feng T."/>
            <person name="Guo Z."/>
            <person name="Ju A."/>
            <person name="Ge J."/>
            <person name="Dong Y."/>
            <person name="Sun W."/>
            <person name="Jiang Y."/>
            <person name="Wang J."/>
            <person name="Yan J."/>
            <person name="Yang H."/>
            <person name="Wang X."/>
            <person name="Gao G.F."/>
            <person name="Yang R."/>
            <person name="Wang J."/>
            <person name="Yu J."/>
        </authorList>
    </citation>
    <scope>NUCLEOTIDE SEQUENCE [LARGE SCALE GENOMIC DNA]</scope>
    <source>
        <strain>05ZYH33</strain>
    </source>
</reference>
<dbReference type="EMBL" id="CP000407">
    <property type="protein sequence ID" value="ABP88995.1"/>
    <property type="molecule type" value="Genomic_DNA"/>
</dbReference>
<dbReference type="SMR" id="A4VSA6"/>
<dbReference type="STRING" id="391295.SSU05_0023"/>
<dbReference type="KEGG" id="ssu:SSU05_0023"/>
<dbReference type="eggNOG" id="COG1381">
    <property type="taxonomic scope" value="Bacteria"/>
</dbReference>
<dbReference type="HOGENOM" id="CLU_066632_4_0_9"/>
<dbReference type="GO" id="GO:0043590">
    <property type="term" value="C:bacterial nucleoid"/>
    <property type="evidence" value="ECO:0007669"/>
    <property type="project" value="TreeGrafter"/>
</dbReference>
<dbReference type="GO" id="GO:0006310">
    <property type="term" value="P:DNA recombination"/>
    <property type="evidence" value="ECO:0007669"/>
    <property type="project" value="UniProtKB-UniRule"/>
</dbReference>
<dbReference type="GO" id="GO:0006302">
    <property type="term" value="P:double-strand break repair"/>
    <property type="evidence" value="ECO:0007669"/>
    <property type="project" value="TreeGrafter"/>
</dbReference>
<dbReference type="Gene3D" id="2.40.50.140">
    <property type="entry name" value="Nucleic acid-binding proteins"/>
    <property type="match status" value="1"/>
</dbReference>
<dbReference type="Gene3D" id="1.20.1440.120">
    <property type="entry name" value="Recombination protein O, C-terminal domain"/>
    <property type="match status" value="1"/>
</dbReference>
<dbReference type="HAMAP" id="MF_00201">
    <property type="entry name" value="RecO"/>
    <property type="match status" value="1"/>
</dbReference>
<dbReference type="InterPro" id="IPR037278">
    <property type="entry name" value="ARFGAP/RecO"/>
</dbReference>
<dbReference type="InterPro" id="IPR022572">
    <property type="entry name" value="DNA_rep/recomb_RecO_N"/>
</dbReference>
<dbReference type="InterPro" id="IPR012340">
    <property type="entry name" value="NA-bd_OB-fold"/>
</dbReference>
<dbReference type="InterPro" id="IPR003717">
    <property type="entry name" value="RecO"/>
</dbReference>
<dbReference type="InterPro" id="IPR042242">
    <property type="entry name" value="RecO_C"/>
</dbReference>
<dbReference type="NCBIfam" id="TIGR00613">
    <property type="entry name" value="reco"/>
    <property type="match status" value="1"/>
</dbReference>
<dbReference type="PANTHER" id="PTHR33991">
    <property type="entry name" value="DNA REPAIR PROTEIN RECO"/>
    <property type="match status" value="1"/>
</dbReference>
<dbReference type="PANTHER" id="PTHR33991:SF1">
    <property type="entry name" value="DNA REPAIR PROTEIN RECO"/>
    <property type="match status" value="1"/>
</dbReference>
<dbReference type="Pfam" id="PF02565">
    <property type="entry name" value="RecO_C"/>
    <property type="match status" value="1"/>
</dbReference>
<dbReference type="Pfam" id="PF11967">
    <property type="entry name" value="RecO_N"/>
    <property type="match status" value="1"/>
</dbReference>
<dbReference type="SUPFAM" id="SSF57863">
    <property type="entry name" value="ArfGap/RecO-like zinc finger"/>
    <property type="match status" value="1"/>
</dbReference>
<dbReference type="SUPFAM" id="SSF50249">
    <property type="entry name" value="Nucleic acid-binding proteins"/>
    <property type="match status" value="1"/>
</dbReference>
<name>RECO_STRSY</name>